<protein>
    <recommendedName>
        <fullName evidence="1">Protein RecA</fullName>
    </recommendedName>
    <alternativeName>
        <fullName evidence="1">Recombinase A</fullName>
    </alternativeName>
</protein>
<organism>
    <name type="scientific">Escherichia coli (strain K12 / MC4100 / BW2952)</name>
    <dbReference type="NCBI Taxonomy" id="595496"/>
    <lineage>
        <taxon>Bacteria</taxon>
        <taxon>Pseudomonadati</taxon>
        <taxon>Pseudomonadota</taxon>
        <taxon>Gammaproteobacteria</taxon>
        <taxon>Enterobacterales</taxon>
        <taxon>Enterobacteriaceae</taxon>
        <taxon>Escherichia</taxon>
    </lineage>
</organism>
<accession>C4ZYU4</accession>
<evidence type="ECO:0000255" key="1">
    <source>
        <dbReference type="HAMAP-Rule" id="MF_00268"/>
    </source>
</evidence>
<evidence type="ECO:0000256" key="2">
    <source>
        <dbReference type="SAM" id="MobiDB-lite"/>
    </source>
</evidence>
<dbReference type="EMBL" id="CP001396">
    <property type="protein sequence ID" value="ACR62841.1"/>
    <property type="molecule type" value="Genomic_DNA"/>
</dbReference>
<dbReference type="RefSeq" id="WP_000963143.1">
    <property type="nucleotide sequence ID" value="NC_012759.1"/>
</dbReference>
<dbReference type="SMR" id="C4ZYU4"/>
<dbReference type="GeneID" id="93779312"/>
<dbReference type="KEGG" id="ebw:BWG_2435"/>
<dbReference type="HOGENOM" id="CLU_040469_3_2_6"/>
<dbReference type="GO" id="GO:0005829">
    <property type="term" value="C:cytosol"/>
    <property type="evidence" value="ECO:0007669"/>
    <property type="project" value="TreeGrafter"/>
</dbReference>
<dbReference type="GO" id="GO:0005524">
    <property type="term" value="F:ATP binding"/>
    <property type="evidence" value="ECO:0007669"/>
    <property type="project" value="UniProtKB-UniRule"/>
</dbReference>
<dbReference type="GO" id="GO:0016887">
    <property type="term" value="F:ATP hydrolysis activity"/>
    <property type="evidence" value="ECO:0007669"/>
    <property type="project" value="InterPro"/>
</dbReference>
<dbReference type="GO" id="GO:0140664">
    <property type="term" value="F:ATP-dependent DNA damage sensor activity"/>
    <property type="evidence" value="ECO:0007669"/>
    <property type="project" value="InterPro"/>
</dbReference>
<dbReference type="GO" id="GO:0003684">
    <property type="term" value="F:damaged DNA binding"/>
    <property type="evidence" value="ECO:0007669"/>
    <property type="project" value="UniProtKB-UniRule"/>
</dbReference>
<dbReference type="GO" id="GO:0003697">
    <property type="term" value="F:single-stranded DNA binding"/>
    <property type="evidence" value="ECO:0007669"/>
    <property type="project" value="UniProtKB-UniRule"/>
</dbReference>
<dbReference type="GO" id="GO:0006310">
    <property type="term" value="P:DNA recombination"/>
    <property type="evidence" value="ECO:0007669"/>
    <property type="project" value="UniProtKB-UniRule"/>
</dbReference>
<dbReference type="GO" id="GO:0006281">
    <property type="term" value="P:DNA repair"/>
    <property type="evidence" value="ECO:0007669"/>
    <property type="project" value="UniProtKB-UniRule"/>
</dbReference>
<dbReference type="GO" id="GO:0009432">
    <property type="term" value="P:SOS response"/>
    <property type="evidence" value="ECO:0007669"/>
    <property type="project" value="UniProtKB-UniRule"/>
</dbReference>
<dbReference type="CDD" id="cd00983">
    <property type="entry name" value="RecA"/>
    <property type="match status" value="1"/>
</dbReference>
<dbReference type="FunFam" id="3.40.50.300:FF:000087">
    <property type="entry name" value="Recombinase RecA"/>
    <property type="match status" value="1"/>
</dbReference>
<dbReference type="Gene3D" id="3.40.50.300">
    <property type="entry name" value="P-loop containing nucleotide triphosphate hydrolases"/>
    <property type="match status" value="1"/>
</dbReference>
<dbReference type="HAMAP" id="MF_00268">
    <property type="entry name" value="RecA"/>
    <property type="match status" value="1"/>
</dbReference>
<dbReference type="InterPro" id="IPR003593">
    <property type="entry name" value="AAA+_ATPase"/>
</dbReference>
<dbReference type="InterPro" id="IPR013765">
    <property type="entry name" value="DNA_recomb/repair_RecA"/>
</dbReference>
<dbReference type="InterPro" id="IPR020584">
    <property type="entry name" value="DNA_recomb/repair_RecA_CS"/>
</dbReference>
<dbReference type="InterPro" id="IPR027417">
    <property type="entry name" value="P-loop_NTPase"/>
</dbReference>
<dbReference type="InterPro" id="IPR049261">
    <property type="entry name" value="RecA-like_C"/>
</dbReference>
<dbReference type="InterPro" id="IPR049428">
    <property type="entry name" value="RecA-like_N"/>
</dbReference>
<dbReference type="InterPro" id="IPR020588">
    <property type="entry name" value="RecA_ATP-bd"/>
</dbReference>
<dbReference type="InterPro" id="IPR023400">
    <property type="entry name" value="RecA_C_sf"/>
</dbReference>
<dbReference type="InterPro" id="IPR020587">
    <property type="entry name" value="RecA_monomer-monomer_interface"/>
</dbReference>
<dbReference type="NCBIfam" id="TIGR02012">
    <property type="entry name" value="tigrfam_recA"/>
    <property type="match status" value="1"/>
</dbReference>
<dbReference type="PANTHER" id="PTHR45900:SF1">
    <property type="entry name" value="MITOCHONDRIAL DNA REPAIR PROTEIN RECA HOMOLOG-RELATED"/>
    <property type="match status" value="1"/>
</dbReference>
<dbReference type="PANTHER" id="PTHR45900">
    <property type="entry name" value="RECA"/>
    <property type="match status" value="1"/>
</dbReference>
<dbReference type="Pfam" id="PF00154">
    <property type="entry name" value="RecA"/>
    <property type="match status" value="1"/>
</dbReference>
<dbReference type="Pfam" id="PF21096">
    <property type="entry name" value="RecA_C"/>
    <property type="match status" value="1"/>
</dbReference>
<dbReference type="PRINTS" id="PR00142">
    <property type="entry name" value="RECA"/>
</dbReference>
<dbReference type="SMART" id="SM00382">
    <property type="entry name" value="AAA"/>
    <property type="match status" value="1"/>
</dbReference>
<dbReference type="SUPFAM" id="SSF52540">
    <property type="entry name" value="P-loop containing nucleoside triphosphate hydrolases"/>
    <property type="match status" value="1"/>
</dbReference>
<dbReference type="SUPFAM" id="SSF54752">
    <property type="entry name" value="RecA protein, C-terminal domain"/>
    <property type="match status" value="1"/>
</dbReference>
<dbReference type="PROSITE" id="PS00321">
    <property type="entry name" value="RECA_1"/>
    <property type="match status" value="1"/>
</dbReference>
<dbReference type="PROSITE" id="PS50162">
    <property type="entry name" value="RECA_2"/>
    <property type="match status" value="1"/>
</dbReference>
<dbReference type="PROSITE" id="PS50163">
    <property type="entry name" value="RECA_3"/>
    <property type="match status" value="1"/>
</dbReference>
<sequence length="353" mass="37973">MAIDENKQKALAAALGQIEKQFGKGSIMRLGEDRSMDVETISTGSLSLDIALGAGGLPMGRIVEIYGPESSGKTTLTLQVIAAAQREGKTCAFIDAEHALDPIYARKLGVDIDNLLCSQPDTGEQALEICDALARSGAVDVIVVDSVAALTPKAEIEGEIGDSHMGLAARMMSQAMRKLAGNLKQSNTLLIFINQIRMKIGVMFGNPETTTGGNALKFYASVRLDIRRIGAVKEGENVVGSETRVKVVKNKIAAPFKQAEFQILYGEGINFYGELVDLGVKEKLIEKAGAWYSYKGEKIGQGKANATAWLKDNPETAKEIEKKVRELLLSNPNSTPDFSVDDSEGVAETNEDF</sequence>
<feature type="chain" id="PRO_1000204705" description="Protein RecA">
    <location>
        <begin position="1"/>
        <end position="353"/>
    </location>
</feature>
<feature type="region of interest" description="Disordered" evidence="2">
    <location>
        <begin position="330"/>
        <end position="353"/>
    </location>
</feature>
<feature type="compositionally biased region" description="Acidic residues" evidence="2">
    <location>
        <begin position="339"/>
        <end position="353"/>
    </location>
</feature>
<feature type="binding site" evidence="1">
    <location>
        <begin position="67"/>
        <end position="74"/>
    </location>
    <ligand>
        <name>ATP</name>
        <dbReference type="ChEBI" id="CHEBI:30616"/>
    </ligand>
</feature>
<name>RECA_ECOBW</name>
<reference key="1">
    <citation type="journal article" date="2009" name="J. Bacteriol.">
        <title>Genomic sequencing reveals regulatory mutations and recombinational events in the widely used MC4100 lineage of Escherichia coli K-12.</title>
        <authorList>
            <person name="Ferenci T."/>
            <person name="Zhou Z."/>
            <person name="Betteridge T."/>
            <person name="Ren Y."/>
            <person name="Liu Y."/>
            <person name="Feng L."/>
            <person name="Reeves P.R."/>
            <person name="Wang L."/>
        </authorList>
    </citation>
    <scope>NUCLEOTIDE SEQUENCE [LARGE SCALE GENOMIC DNA]</scope>
    <source>
        <strain>K12 / MC4100 / BW2952</strain>
    </source>
</reference>
<comment type="function">
    <text evidence="1">Can catalyze the hydrolysis of ATP in the presence of single-stranded DNA, the ATP-dependent uptake of single-stranded DNA by duplex DNA, and the ATP-dependent hybridization of homologous single-stranded DNAs. It interacts with LexA causing its activation and leading to its autocatalytic cleavage.</text>
</comment>
<comment type="subcellular location">
    <subcellularLocation>
        <location evidence="1">Cytoplasm</location>
    </subcellularLocation>
</comment>
<comment type="similarity">
    <text evidence="1">Belongs to the RecA family.</text>
</comment>
<proteinExistence type="inferred from homology"/>
<gene>
    <name evidence="1" type="primary">recA</name>
    <name type="ordered locus">BWG_2435</name>
</gene>
<keyword id="KW-0067">ATP-binding</keyword>
<keyword id="KW-0963">Cytoplasm</keyword>
<keyword id="KW-0227">DNA damage</keyword>
<keyword id="KW-0233">DNA recombination</keyword>
<keyword id="KW-0234">DNA repair</keyword>
<keyword id="KW-0238">DNA-binding</keyword>
<keyword id="KW-0547">Nucleotide-binding</keyword>
<keyword id="KW-0742">SOS response</keyword>